<dbReference type="PIR" id="G31439">
    <property type="entry name" value="G31439"/>
</dbReference>
<dbReference type="SMR" id="P68150"/>
<dbReference type="Allergome" id="2106">
    <property type="allergen name" value="Ana p 1"/>
</dbReference>
<dbReference type="Proteomes" id="UP000694400">
    <property type="component" value="Unplaced"/>
</dbReference>
<dbReference type="GO" id="GO:0005576">
    <property type="term" value="C:extracellular region"/>
    <property type="evidence" value="ECO:0007669"/>
    <property type="project" value="UniProtKB-SubCell"/>
</dbReference>
<dbReference type="GO" id="GO:0004867">
    <property type="term" value="F:serine-type endopeptidase inhibitor activity"/>
    <property type="evidence" value="ECO:0007669"/>
    <property type="project" value="UniProtKB-KW"/>
</dbReference>
<dbReference type="CDD" id="cd00104">
    <property type="entry name" value="KAZAL_FS"/>
    <property type="match status" value="1"/>
</dbReference>
<dbReference type="FunFam" id="3.30.60.30:FF:000037">
    <property type="entry name" value="Ovomucoid"/>
    <property type="match status" value="1"/>
</dbReference>
<dbReference type="Gene3D" id="3.30.60.30">
    <property type="match status" value="1"/>
</dbReference>
<dbReference type="InterPro" id="IPR051597">
    <property type="entry name" value="Bifunctional_prot_inhibitor"/>
</dbReference>
<dbReference type="InterPro" id="IPR002350">
    <property type="entry name" value="Kazal_dom"/>
</dbReference>
<dbReference type="InterPro" id="IPR036058">
    <property type="entry name" value="Kazal_dom_sf"/>
</dbReference>
<dbReference type="InterPro" id="IPR001239">
    <property type="entry name" value="Prot_inh_Kazal-m"/>
</dbReference>
<dbReference type="PANTHER" id="PTHR47729:SF1">
    <property type="entry name" value="OVOMUCOID-LIKE-RELATED"/>
    <property type="match status" value="1"/>
</dbReference>
<dbReference type="PANTHER" id="PTHR47729">
    <property type="entry name" value="SERINE PEPTIDASE INHIBITOR, KAZAL TYPE 2, TANDEM DUPLICATE 1-RELATED"/>
    <property type="match status" value="1"/>
</dbReference>
<dbReference type="Pfam" id="PF00050">
    <property type="entry name" value="Kazal_1"/>
    <property type="match status" value="1"/>
</dbReference>
<dbReference type="PRINTS" id="PR00290">
    <property type="entry name" value="KAZALINHBTR"/>
</dbReference>
<dbReference type="SMART" id="SM00280">
    <property type="entry name" value="KAZAL"/>
    <property type="match status" value="1"/>
</dbReference>
<dbReference type="SUPFAM" id="SSF100895">
    <property type="entry name" value="Kazal-type serine protease inhibitors"/>
    <property type="match status" value="1"/>
</dbReference>
<dbReference type="PROSITE" id="PS00282">
    <property type="entry name" value="KAZAL_1"/>
    <property type="match status" value="1"/>
</dbReference>
<dbReference type="PROSITE" id="PS51465">
    <property type="entry name" value="KAZAL_2"/>
    <property type="match status" value="1"/>
</dbReference>
<keyword id="KW-0903">Direct protein sequencing</keyword>
<keyword id="KW-1015">Disulfide bond</keyword>
<keyword id="KW-0325">Glycoprotein</keyword>
<keyword id="KW-0646">Protease inhibitor</keyword>
<keyword id="KW-0677">Repeat</keyword>
<keyword id="KW-0964">Secreted</keyword>
<keyword id="KW-0722">Serine protease inhibitor</keyword>
<accession>P68150</accession>
<accession>P05576</accession>
<proteinExistence type="evidence at protein level"/>
<name>IOVO_ANAPL</name>
<evidence type="ECO:0000255" key="1">
    <source>
        <dbReference type="PROSITE-ProRule" id="PRU00798"/>
    </source>
</evidence>
<feature type="chain" id="PRO_0000073056" description="Ovomucoid">
    <location>
        <begin position="1" status="less than"/>
        <end position="54" status="greater than"/>
    </location>
</feature>
<feature type="domain" description="Kazal-like" evidence="1">
    <location>
        <begin position="4"/>
        <end position="54"/>
    </location>
</feature>
<feature type="site" description="Reactive bond 3">
    <location>
        <begin position="16"/>
        <end position="17"/>
    </location>
</feature>
<feature type="glycosylation site" description="N-linked (GlcNAc...) asparagine">
    <location>
        <position position="43"/>
    </location>
</feature>
<feature type="disulfide bond">
    <location>
        <begin position="6"/>
        <end position="36"/>
    </location>
</feature>
<feature type="disulfide bond">
    <location>
        <begin position="14"/>
        <end position="33"/>
    </location>
</feature>
<feature type="disulfide bond">
    <location>
        <begin position="22"/>
        <end position="54"/>
    </location>
</feature>
<feature type="non-terminal residue">
    <location>
        <position position="1"/>
    </location>
</feature>
<feature type="non-terminal residue">
    <location>
        <position position="54"/>
    </location>
</feature>
<comment type="subcellular location">
    <subcellularLocation>
        <location>Secreted</location>
    </subcellularLocation>
</comment>
<comment type="domain">
    <text>Avian ovomucoid consists of three homologous, tandem Kazal family inhibitory domains.</text>
</comment>
<reference key="1">
    <citation type="journal article" date="1987" name="Biochemistry">
        <title>Ovomucoid third domains from 100 avian species: isolation, sequences, and hypervariability of enzyme-inhibitor contact residues.</title>
        <authorList>
            <person name="Laskowski M. Jr."/>
            <person name="Kato I."/>
            <person name="Ardelt W."/>
            <person name="Cook J."/>
            <person name="Denton A."/>
            <person name="Empie M.W."/>
            <person name="Kohr W.J."/>
            <person name="Park S.J."/>
            <person name="Parks K."/>
            <person name="Schatzley B.L."/>
            <person name="Schoenberger O.L."/>
            <person name="Tashiro M."/>
            <person name="Vichot G."/>
            <person name="Whatley H.E."/>
            <person name="Wieczorek A."/>
            <person name="Wieczorek M."/>
        </authorList>
    </citation>
    <scope>PROTEIN SEQUENCE</scope>
</reference>
<protein>
    <recommendedName>
        <fullName>Ovomucoid</fullName>
    </recommendedName>
</protein>
<organism>
    <name type="scientific">Anas platyrhynchos</name>
    <name type="common">Mallard</name>
    <name type="synonym">Anas boschas</name>
    <dbReference type="NCBI Taxonomy" id="8839"/>
    <lineage>
        <taxon>Eukaryota</taxon>
        <taxon>Metazoa</taxon>
        <taxon>Chordata</taxon>
        <taxon>Craniata</taxon>
        <taxon>Vertebrata</taxon>
        <taxon>Euteleostomi</taxon>
        <taxon>Archelosauria</taxon>
        <taxon>Archosauria</taxon>
        <taxon>Dinosauria</taxon>
        <taxon>Saurischia</taxon>
        <taxon>Theropoda</taxon>
        <taxon>Coelurosauria</taxon>
        <taxon>Aves</taxon>
        <taxon>Neognathae</taxon>
        <taxon>Galloanserae</taxon>
        <taxon>Anseriformes</taxon>
        <taxon>Anatidae</taxon>
        <taxon>Anatinae</taxon>
        <taxon>Anas</taxon>
    </lineage>
</organism>
<sequence>VATVDCSGYPKPACTMEYMPLCGSDNKTYGNKCNFCNAVVDSNGTLTLSHFGEC</sequence>